<reference key="1">
    <citation type="journal article" date="2009" name="Proc. Natl. Acad. Sci. U.S.A.">
        <title>Biogeography of the Sulfolobus islandicus pan-genome.</title>
        <authorList>
            <person name="Reno M.L."/>
            <person name="Held N.L."/>
            <person name="Fields C.J."/>
            <person name="Burke P.V."/>
            <person name="Whitaker R.J."/>
        </authorList>
    </citation>
    <scope>NUCLEOTIDE SEQUENCE [LARGE SCALE GENOMIC DNA]</scope>
    <source>
        <strain>Y.G.57.14 / Yellowstone #1</strain>
    </source>
</reference>
<accession>C3NDQ2</accession>
<sequence>MIQIFFLGTGAGSPSKKRKLPAFLVRREGLNILLDCGEGTQYTLMNNKLGINSIKIIGITHMHGDHVFGLLGVIASMGLLDRKETLYILGPRDLKDFLYTSFEYSKFNPSFKIEFIDNYNDQNITIATFKTCHTVESQGYLISERDRVKIDEEKLEKEKIKDWRVMRKLKEGKTVEYNGKFLKPEDYLVIKRGLKVAYTGDTIPCQSVIESVKGVDLLIHDSTFLNEPSAFTYGHSNVADAAKVALEASVKLLALTHISPRYEDVTEHLKVARRIFPKSILPDDLSYITLK</sequence>
<name>RNZ_SACI7</name>
<dbReference type="EC" id="3.1.26.11" evidence="1"/>
<dbReference type="EMBL" id="CP001403">
    <property type="protein sequence ID" value="ACP45441.1"/>
    <property type="molecule type" value="Genomic_DNA"/>
</dbReference>
<dbReference type="RefSeq" id="WP_012716098.1">
    <property type="nucleotide sequence ID" value="NC_012622.1"/>
</dbReference>
<dbReference type="SMR" id="C3NDQ2"/>
<dbReference type="GeneID" id="7806872"/>
<dbReference type="GeneID" id="7810635"/>
<dbReference type="KEGG" id="siy:YG5714_1174"/>
<dbReference type="HOGENOM" id="CLU_031317_2_1_2"/>
<dbReference type="Proteomes" id="UP000002308">
    <property type="component" value="Chromosome"/>
</dbReference>
<dbReference type="GO" id="GO:0042781">
    <property type="term" value="F:3'-tRNA processing endoribonuclease activity"/>
    <property type="evidence" value="ECO:0007669"/>
    <property type="project" value="UniProtKB-UniRule"/>
</dbReference>
<dbReference type="GO" id="GO:0008270">
    <property type="term" value="F:zinc ion binding"/>
    <property type="evidence" value="ECO:0007669"/>
    <property type="project" value="UniProtKB-UniRule"/>
</dbReference>
<dbReference type="CDD" id="cd07717">
    <property type="entry name" value="RNaseZ_ZiPD-like_MBL-fold"/>
    <property type="match status" value="1"/>
</dbReference>
<dbReference type="FunFam" id="3.60.15.10:FF:000075">
    <property type="entry name" value="Ribonuclease Z"/>
    <property type="match status" value="1"/>
</dbReference>
<dbReference type="Gene3D" id="3.60.15.10">
    <property type="entry name" value="Ribonuclease Z/Hydroxyacylglutathione hydrolase-like"/>
    <property type="match status" value="1"/>
</dbReference>
<dbReference type="HAMAP" id="MF_01818">
    <property type="entry name" value="RNase_Z_BN"/>
    <property type="match status" value="1"/>
</dbReference>
<dbReference type="InterPro" id="IPR001279">
    <property type="entry name" value="Metallo-B-lactamas"/>
</dbReference>
<dbReference type="InterPro" id="IPR036866">
    <property type="entry name" value="RibonucZ/Hydroxyglut_hydro"/>
</dbReference>
<dbReference type="InterPro" id="IPR013471">
    <property type="entry name" value="RNase_Z/BN"/>
</dbReference>
<dbReference type="NCBIfam" id="NF000801">
    <property type="entry name" value="PRK00055.1-3"/>
    <property type="match status" value="1"/>
</dbReference>
<dbReference type="NCBIfam" id="TIGR02651">
    <property type="entry name" value="RNase_Z"/>
    <property type="match status" value="1"/>
</dbReference>
<dbReference type="PANTHER" id="PTHR46018">
    <property type="entry name" value="ZINC PHOSPHODIESTERASE ELAC PROTEIN 1"/>
    <property type="match status" value="1"/>
</dbReference>
<dbReference type="PANTHER" id="PTHR46018:SF2">
    <property type="entry name" value="ZINC PHOSPHODIESTERASE ELAC PROTEIN 1"/>
    <property type="match status" value="1"/>
</dbReference>
<dbReference type="Pfam" id="PF00753">
    <property type="entry name" value="Lactamase_B"/>
    <property type="match status" value="1"/>
</dbReference>
<dbReference type="Pfam" id="PF12706">
    <property type="entry name" value="Lactamase_B_2"/>
    <property type="match status" value="1"/>
</dbReference>
<dbReference type="SUPFAM" id="SSF56281">
    <property type="entry name" value="Metallo-hydrolase/oxidoreductase"/>
    <property type="match status" value="1"/>
</dbReference>
<evidence type="ECO:0000255" key="1">
    <source>
        <dbReference type="HAMAP-Rule" id="MF_01818"/>
    </source>
</evidence>
<feature type="chain" id="PRO_1000216019" description="Ribonuclease Z">
    <location>
        <begin position="1"/>
        <end position="291"/>
    </location>
</feature>
<feature type="active site" description="Proton acceptor" evidence="1">
    <location>
        <position position="65"/>
    </location>
</feature>
<feature type="binding site" evidence="1">
    <location>
        <position position="61"/>
    </location>
    <ligand>
        <name>Zn(2+)</name>
        <dbReference type="ChEBI" id="CHEBI:29105"/>
        <label>1</label>
        <note>catalytic</note>
    </ligand>
</feature>
<feature type="binding site" evidence="1">
    <location>
        <position position="63"/>
    </location>
    <ligand>
        <name>Zn(2+)</name>
        <dbReference type="ChEBI" id="CHEBI:29105"/>
        <label>1</label>
        <note>catalytic</note>
    </ligand>
</feature>
<feature type="binding site" evidence="1">
    <location>
        <position position="65"/>
    </location>
    <ligand>
        <name>Zn(2+)</name>
        <dbReference type="ChEBI" id="CHEBI:29105"/>
        <label>2</label>
        <note>catalytic</note>
    </ligand>
</feature>
<feature type="binding site" evidence="1">
    <location>
        <position position="66"/>
    </location>
    <ligand>
        <name>Zn(2+)</name>
        <dbReference type="ChEBI" id="CHEBI:29105"/>
        <label>2</label>
        <note>catalytic</note>
    </ligand>
</feature>
<feature type="binding site" evidence="1">
    <location>
        <position position="133"/>
    </location>
    <ligand>
        <name>Zn(2+)</name>
        <dbReference type="ChEBI" id="CHEBI:29105"/>
        <label>1</label>
        <note>catalytic</note>
    </ligand>
</feature>
<feature type="binding site" evidence="1">
    <location>
        <position position="201"/>
    </location>
    <ligand>
        <name>Zn(2+)</name>
        <dbReference type="ChEBI" id="CHEBI:29105"/>
        <label>1</label>
        <note>catalytic</note>
    </ligand>
</feature>
<feature type="binding site" evidence="1">
    <location>
        <position position="201"/>
    </location>
    <ligand>
        <name>Zn(2+)</name>
        <dbReference type="ChEBI" id="CHEBI:29105"/>
        <label>2</label>
        <note>catalytic</note>
    </ligand>
</feature>
<feature type="binding site" evidence="1">
    <location>
        <position position="257"/>
    </location>
    <ligand>
        <name>Zn(2+)</name>
        <dbReference type="ChEBI" id="CHEBI:29105"/>
        <label>2</label>
        <note>catalytic</note>
    </ligand>
</feature>
<keyword id="KW-0255">Endonuclease</keyword>
<keyword id="KW-0378">Hydrolase</keyword>
<keyword id="KW-0479">Metal-binding</keyword>
<keyword id="KW-0540">Nuclease</keyword>
<keyword id="KW-0819">tRNA processing</keyword>
<keyword id="KW-0862">Zinc</keyword>
<comment type="function">
    <text evidence="1">Zinc phosphodiesterase, which displays some tRNA 3'-processing endonuclease activity. Probably involved in tRNA maturation, by removing a 3'-trailer from precursor tRNA.</text>
</comment>
<comment type="catalytic activity">
    <reaction evidence="1">
        <text>Endonucleolytic cleavage of RNA, removing extra 3' nucleotides from tRNA precursor, generating 3' termini of tRNAs. A 3'-hydroxy group is left at the tRNA terminus and a 5'-phosphoryl group is left at the trailer molecule.</text>
        <dbReference type="EC" id="3.1.26.11"/>
    </reaction>
</comment>
<comment type="cofactor">
    <cofactor evidence="1">
        <name>Zn(2+)</name>
        <dbReference type="ChEBI" id="CHEBI:29105"/>
    </cofactor>
    <text evidence="1">Binds 2 Zn(2+) ions.</text>
</comment>
<comment type="subunit">
    <text evidence="1">Homodimer.</text>
</comment>
<comment type="similarity">
    <text evidence="1">Belongs to the RNase Z family.</text>
</comment>
<gene>
    <name evidence="1" type="primary">rnz</name>
    <name type="ordered locus">YG5714_1174</name>
</gene>
<proteinExistence type="inferred from homology"/>
<protein>
    <recommendedName>
        <fullName evidence="1">Ribonuclease Z</fullName>
        <shortName evidence="1">RNase Z</shortName>
        <ecNumber evidence="1">3.1.26.11</ecNumber>
    </recommendedName>
    <alternativeName>
        <fullName evidence="1">tRNA 3 endonuclease</fullName>
    </alternativeName>
    <alternativeName>
        <fullName evidence="1">tRNase Z</fullName>
    </alternativeName>
</protein>
<organism>
    <name type="scientific">Saccharolobus islandicus (strain Y.G.57.14 / Yellowstone #1)</name>
    <name type="common">Sulfolobus islandicus</name>
    <dbReference type="NCBI Taxonomy" id="439386"/>
    <lineage>
        <taxon>Archaea</taxon>
        <taxon>Thermoproteota</taxon>
        <taxon>Thermoprotei</taxon>
        <taxon>Sulfolobales</taxon>
        <taxon>Sulfolobaceae</taxon>
        <taxon>Saccharolobus</taxon>
    </lineage>
</organism>